<gene>
    <name type="ordered locus">ECU02_1540</name>
</gene>
<keyword id="KW-1185">Reference proteome</keyword>
<dbReference type="EMBL" id="AL590442">
    <property type="protein sequence ID" value="CAD25183.1"/>
    <property type="molecule type" value="Genomic_DNA"/>
</dbReference>
<dbReference type="RefSeq" id="NP_584679.1">
    <property type="nucleotide sequence ID" value="NM_001040868.1"/>
</dbReference>
<dbReference type="SMR" id="Q8SW86"/>
<dbReference type="STRING" id="284813.Q8SW86"/>
<dbReference type="GeneID" id="858669"/>
<dbReference type="KEGG" id="ecu:ECU02_1540"/>
<dbReference type="VEuPathDB" id="MicrosporidiaDB:ECU02_1540"/>
<dbReference type="HOGENOM" id="CLU_035434_0_0_1"/>
<dbReference type="InParanoid" id="Q8SW86"/>
<dbReference type="Proteomes" id="UP000000819">
    <property type="component" value="Chromosome II"/>
</dbReference>
<dbReference type="InterPro" id="IPR022115">
    <property type="entry name" value="DUF3654"/>
</dbReference>
<dbReference type="InterPro" id="IPR011667">
    <property type="entry name" value="UPF0329"/>
</dbReference>
<dbReference type="Pfam" id="PF07753">
    <property type="entry name" value="DUF1609"/>
    <property type="match status" value="1"/>
</dbReference>
<dbReference type="Pfam" id="PF12376">
    <property type="entry name" value="DUF3654"/>
    <property type="match status" value="1"/>
</dbReference>
<evidence type="ECO:0000256" key="1">
    <source>
        <dbReference type="SAM" id="MobiDB-lite"/>
    </source>
</evidence>
<evidence type="ECO:0000305" key="2"/>
<reference key="1">
    <citation type="journal article" date="2001" name="Nature">
        <title>Genome sequence and gene compaction of the eukaryote parasite Encephalitozoon cuniculi.</title>
        <authorList>
            <person name="Katinka M.D."/>
            <person name="Duprat S."/>
            <person name="Cornillot E."/>
            <person name="Metenier G."/>
            <person name="Thomarat F."/>
            <person name="Prensier G."/>
            <person name="Barbe V."/>
            <person name="Peyretaillade E."/>
            <person name="Brottier P."/>
            <person name="Wincker P."/>
            <person name="Delbac F."/>
            <person name="El Alaoui H."/>
            <person name="Peyret P."/>
            <person name="Saurin W."/>
            <person name="Gouy M."/>
            <person name="Weissenbach J."/>
            <person name="Vivares C.P."/>
        </authorList>
    </citation>
    <scope>NUCLEOTIDE SEQUENCE [LARGE SCALE GENOMIC DNA]</scope>
    <source>
        <strain>GB-M1</strain>
    </source>
</reference>
<proteinExistence type="inferred from homology"/>
<accession>Q8SW86</accession>
<sequence>MRVWLVCMVGLLGGLHGSNVEESEDMKKVRKIFEKAFSRKLYDSEVERIRKLEKELCLDTRVMIPFIFHGDRVVALPTTRYQDVDKSEKKYVEKVVVQLRWLVWRLMAWVYVPGGSSWIRDLINEVFEATVSRDPDPVSLYKGARRRSGIRLMDLVMKVFKQNVSMVSEFGQRLARSAEDRIQGIPGSLSPEERKKEEEMLRKIKEHGERLCTKERQEEMVRAQEIICDVCAYVWERDEDRMSFIMEVYSRHLCLKIVMPYTDIEVPLISYIDHHKLVSTDEKYKSMNIMAEVFKQAFIEHKGIDDESINNAVREVRERKRLEEMREMEERKRREEERAKNEEELLRMVEREKREESKGRGKKKGGKRGAGEAKEESKEEDGKEEEGVEAEEEESAEVPLVETAVGGARRKKSLKGKRKGDGHHYKIHSRVLRWKRSAEKIKRELDKGSEERWKNRSIEEIKEQKKVHDIVEVSELIKSKECDRFFFRTGKYMKGGSERWKMVANGILEEGGEKKVGKVEVGLFKGERGESVVYHLMFRPTETERAGMVGGSSFGKGDDVDEIKKEESSDMSGFRYPPGVRCEMTSNGNEFRIEYRNPKNTSEVLRTLTILRIPEI</sequence>
<name>Y2F4_ENCCU</name>
<organism>
    <name type="scientific">Encephalitozoon cuniculi (strain GB-M1)</name>
    <name type="common">Microsporidian parasite</name>
    <dbReference type="NCBI Taxonomy" id="284813"/>
    <lineage>
        <taxon>Eukaryota</taxon>
        <taxon>Fungi</taxon>
        <taxon>Fungi incertae sedis</taxon>
        <taxon>Microsporidia</taxon>
        <taxon>Unikaryonidae</taxon>
        <taxon>Encephalitozoon</taxon>
    </lineage>
</organism>
<comment type="similarity">
    <text evidence="2">Belongs to the UPF0329 family.</text>
</comment>
<feature type="chain" id="PRO_0000223152" description="UPF0329 protein ECU02_1540">
    <location>
        <begin position="1"/>
        <end position="616"/>
    </location>
</feature>
<feature type="region of interest" description="Disordered" evidence="1">
    <location>
        <begin position="350"/>
        <end position="427"/>
    </location>
</feature>
<feature type="compositionally biased region" description="Basic and acidic residues" evidence="1">
    <location>
        <begin position="350"/>
        <end position="359"/>
    </location>
</feature>
<feature type="compositionally biased region" description="Basic and acidic residues" evidence="1">
    <location>
        <begin position="369"/>
        <end position="381"/>
    </location>
</feature>
<feature type="compositionally biased region" description="Acidic residues" evidence="1">
    <location>
        <begin position="382"/>
        <end position="396"/>
    </location>
</feature>
<feature type="compositionally biased region" description="Basic residues" evidence="1">
    <location>
        <begin position="408"/>
        <end position="427"/>
    </location>
</feature>
<protein>
    <recommendedName>
        <fullName>UPF0329 protein ECU02_1540</fullName>
    </recommendedName>
</protein>